<reference key="1">
    <citation type="journal article" date="2002" name="Nature">
        <title>Sequence and analysis of chromosome 2 of Dictyostelium discoideum.</title>
        <authorList>
            <person name="Gloeckner G."/>
            <person name="Eichinger L."/>
            <person name="Szafranski K."/>
            <person name="Pachebat J.A."/>
            <person name="Bankier A.T."/>
            <person name="Dear P.H."/>
            <person name="Lehmann R."/>
            <person name="Baumgart C."/>
            <person name="Parra G."/>
            <person name="Abril J.F."/>
            <person name="Guigo R."/>
            <person name="Kumpf K."/>
            <person name="Tunggal B."/>
            <person name="Cox E.C."/>
            <person name="Quail M.A."/>
            <person name="Platzer M."/>
            <person name="Rosenthal A."/>
            <person name="Noegel A.A."/>
        </authorList>
    </citation>
    <scope>NUCLEOTIDE SEQUENCE [LARGE SCALE GENOMIC DNA]</scope>
    <source>
        <strain>AX4</strain>
    </source>
</reference>
<reference key="2">
    <citation type="journal article" date="2005" name="Nature">
        <title>The genome of the social amoeba Dictyostelium discoideum.</title>
        <authorList>
            <person name="Eichinger L."/>
            <person name="Pachebat J.A."/>
            <person name="Gloeckner G."/>
            <person name="Rajandream M.A."/>
            <person name="Sucgang R."/>
            <person name="Berriman M."/>
            <person name="Song J."/>
            <person name="Olsen R."/>
            <person name="Szafranski K."/>
            <person name="Xu Q."/>
            <person name="Tunggal B."/>
            <person name="Kummerfeld S."/>
            <person name="Madera M."/>
            <person name="Konfortov B.A."/>
            <person name="Rivero F."/>
            <person name="Bankier A.T."/>
            <person name="Lehmann R."/>
            <person name="Hamlin N."/>
            <person name="Davies R."/>
            <person name="Gaudet P."/>
            <person name="Fey P."/>
            <person name="Pilcher K."/>
            <person name="Chen G."/>
            <person name="Saunders D."/>
            <person name="Sodergren E.J."/>
            <person name="Davis P."/>
            <person name="Kerhornou A."/>
            <person name="Nie X."/>
            <person name="Hall N."/>
            <person name="Anjard C."/>
            <person name="Hemphill L."/>
            <person name="Bason N."/>
            <person name="Farbrother P."/>
            <person name="Desany B."/>
            <person name="Just E."/>
            <person name="Morio T."/>
            <person name="Rost R."/>
            <person name="Churcher C.M."/>
            <person name="Cooper J."/>
            <person name="Haydock S."/>
            <person name="van Driessche N."/>
            <person name="Cronin A."/>
            <person name="Goodhead I."/>
            <person name="Muzny D.M."/>
            <person name="Mourier T."/>
            <person name="Pain A."/>
            <person name="Lu M."/>
            <person name="Harper D."/>
            <person name="Lindsay R."/>
            <person name="Hauser H."/>
            <person name="James K.D."/>
            <person name="Quiles M."/>
            <person name="Madan Babu M."/>
            <person name="Saito T."/>
            <person name="Buchrieser C."/>
            <person name="Wardroper A."/>
            <person name="Felder M."/>
            <person name="Thangavelu M."/>
            <person name="Johnson D."/>
            <person name="Knights A."/>
            <person name="Loulseged H."/>
            <person name="Mungall K.L."/>
            <person name="Oliver K."/>
            <person name="Price C."/>
            <person name="Quail M.A."/>
            <person name="Urushihara H."/>
            <person name="Hernandez J."/>
            <person name="Rabbinowitsch E."/>
            <person name="Steffen D."/>
            <person name="Sanders M."/>
            <person name="Ma J."/>
            <person name="Kohara Y."/>
            <person name="Sharp S."/>
            <person name="Simmonds M.N."/>
            <person name="Spiegler S."/>
            <person name="Tivey A."/>
            <person name="Sugano S."/>
            <person name="White B."/>
            <person name="Walker D."/>
            <person name="Woodward J.R."/>
            <person name="Winckler T."/>
            <person name="Tanaka Y."/>
            <person name="Shaulsky G."/>
            <person name="Schleicher M."/>
            <person name="Weinstock G.M."/>
            <person name="Rosenthal A."/>
            <person name="Cox E.C."/>
            <person name="Chisholm R.L."/>
            <person name="Gibbs R.A."/>
            <person name="Loomis W.F."/>
            <person name="Platzer M."/>
            <person name="Kay R.R."/>
            <person name="Williams J.G."/>
            <person name="Dear P.H."/>
            <person name="Noegel A.A."/>
            <person name="Barrell B.G."/>
            <person name="Kuspa A."/>
        </authorList>
    </citation>
    <scope>NUCLEOTIDE SEQUENCE [LARGE SCALE GENOMIC DNA]</scope>
    <source>
        <strain>AX4</strain>
    </source>
</reference>
<reference key="3">
    <citation type="journal article" date="2006" name="Eur. J. Cell Biol.">
        <title>The Dictyostelium repertoire of seven transmembrane domain receptors.</title>
        <authorList>
            <person name="Prabhu Y."/>
            <person name="Eichinger L."/>
        </authorList>
    </citation>
    <scope>NOMENCLATURE</scope>
</reference>
<reference key="4">
    <citation type="journal article" date="2008" name="BMC Microbiol.">
        <title>Dictyostelium transcriptional responses to Pseudomonas aeruginosa: common and specific effects from PAO1 and PA14 strains.</title>
        <authorList>
            <person name="Carilla-Latorre S."/>
            <person name="Calvo-Garrido J."/>
            <person name="Bloomfield G."/>
            <person name="Skelton J."/>
            <person name="Kay R.R."/>
            <person name="Ivens A."/>
            <person name="Martinez J.L."/>
            <person name="Escalante R."/>
        </authorList>
    </citation>
    <scope>INDUCTION [LARGE SCALE ANALYSIS]</scope>
</reference>
<proteinExistence type="evidence at transcript level"/>
<dbReference type="EMBL" id="AAFI02000012">
    <property type="protein sequence ID" value="EAL70279.1"/>
    <property type="molecule type" value="Genomic_DNA"/>
</dbReference>
<dbReference type="RefSeq" id="XP_643884.1">
    <property type="nucleotide sequence ID" value="XM_638792.1"/>
</dbReference>
<dbReference type="FunCoup" id="Q556C6">
    <property type="interactions" value="19"/>
</dbReference>
<dbReference type="STRING" id="44689.Q556C6"/>
<dbReference type="GlyCosmos" id="Q556C6">
    <property type="glycosylation" value="5 sites, No reported glycans"/>
</dbReference>
<dbReference type="GlyGen" id="Q556C6">
    <property type="glycosylation" value="6 sites"/>
</dbReference>
<dbReference type="PaxDb" id="44689-DDB0231856"/>
<dbReference type="EnsemblProtists" id="EAL70279">
    <property type="protein sequence ID" value="EAL70279"/>
    <property type="gene ID" value="DDB_G0274773"/>
</dbReference>
<dbReference type="GeneID" id="8619310"/>
<dbReference type="KEGG" id="ddi:DDB_G0274773"/>
<dbReference type="dictyBase" id="DDB_G0274773">
    <property type="gene designation" value="fslH"/>
</dbReference>
<dbReference type="VEuPathDB" id="AmoebaDB:DDB_G0274773"/>
<dbReference type="eggNOG" id="ENOG502RBXU">
    <property type="taxonomic scope" value="Eukaryota"/>
</dbReference>
<dbReference type="HOGENOM" id="CLU_030318_0_0_1"/>
<dbReference type="InParanoid" id="Q556C6"/>
<dbReference type="OMA" id="KCEKYIG"/>
<dbReference type="PhylomeDB" id="Q556C6"/>
<dbReference type="PRO" id="PR:Q556C6"/>
<dbReference type="Proteomes" id="UP000002195">
    <property type="component" value="Chromosome 2"/>
</dbReference>
<dbReference type="GO" id="GO:0016020">
    <property type="term" value="C:membrane"/>
    <property type="evidence" value="ECO:0007669"/>
    <property type="project" value="UniProtKB-SubCell"/>
</dbReference>
<dbReference type="GO" id="GO:0004888">
    <property type="term" value="F:transmembrane signaling receptor activity"/>
    <property type="evidence" value="ECO:0007669"/>
    <property type="project" value="InterPro"/>
</dbReference>
<dbReference type="GO" id="GO:0007166">
    <property type="term" value="P:cell surface receptor signaling pathway"/>
    <property type="evidence" value="ECO:0007669"/>
    <property type="project" value="InterPro"/>
</dbReference>
<dbReference type="Gene3D" id="1.10.2000.10">
    <property type="entry name" value="Frizzled cysteine-rich domain"/>
    <property type="match status" value="1"/>
</dbReference>
<dbReference type="Gene3D" id="1.20.1070.10">
    <property type="entry name" value="Rhodopsin 7-helix transmembrane proteins"/>
    <property type="match status" value="1"/>
</dbReference>
<dbReference type="InterPro" id="IPR036790">
    <property type="entry name" value="Frizzled_dom_sf"/>
</dbReference>
<dbReference type="InterPro" id="IPR017981">
    <property type="entry name" value="GPCR_2-like_7TM"/>
</dbReference>
<dbReference type="InterPro" id="IPR050949">
    <property type="entry name" value="GPCR_Fz/Smo-like"/>
</dbReference>
<dbReference type="PANTHER" id="PTHR31787:SF3">
    <property type="entry name" value="FRIZZLED AND SMOOTHENED-LIKE PROTEIN H"/>
    <property type="match status" value="1"/>
</dbReference>
<dbReference type="PANTHER" id="PTHR31787">
    <property type="entry name" value="G-PROTEIN-COUPLED RECEPTOR GPCR FAMILY PROTEIN"/>
    <property type="match status" value="1"/>
</dbReference>
<dbReference type="PROSITE" id="PS50261">
    <property type="entry name" value="G_PROTEIN_RECEP_F2_4"/>
    <property type="match status" value="1"/>
</dbReference>
<keyword id="KW-1015">Disulfide bond</keyword>
<keyword id="KW-0325">Glycoprotein</keyword>
<keyword id="KW-0472">Membrane</keyword>
<keyword id="KW-0675">Receptor</keyword>
<keyword id="KW-1185">Reference proteome</keyword>
<keyword id="KW-0732">Signal</keyword>
<keyword id="KW-0812">Transmembrane</keyword>
<keyword id="KW-1133">Transmembrane helix</keyword>
<gene>
    <name type="primary">fslH</name>
    <name type="ORF">DDB_G0274773</name>
</gene>
<accession>Q556C6</accession>
<evidence type="ECO:0000250" key="1"/>
<evidence type="ECO:0000255" key="2"/>
<evidence type="ECO:0000256" key="3">
    <source>
        <dbReference type="SAM" id="MobiDB-lite"/>
    </source>
</evidence>
<evidence type="ECO:0000269" key="4">
    <source>
    </source>
</evidence>
<evidence type="ECO:0000305" key="5"/>
<organism>
    <name type="scientific">Dictyostelium discoideum</name>
    <name type="common">Social amoeba</name>
    <dbReference type="NCBI Taxonomy" id="44689"/>
    <lineage>
        <taxon>Eukaryota</taxon>
        <taxon>Amoebozoa</taxon>
        <taxon>Evosea</taxon>
        <taxon>Eumycetozoa</taxon>
        <taxon>Dictyostelia</taxon>
        <taxon>Dictyosteliales</taxon>
        <taxon>Dictyosteliaceae</taxon>
        <taxon>Dictyostelium</taxon>
    </lineage>
</organism>
<sequence length="621" mass="69274">MNLKFYNLIFFISFLICCIHGQRYLPVEGGKCEKYIGDGDSGKRICNGYLANPDSVYVHNKTQQETLKDLRSLINLLELNNPSKECINPSNYKIMCAMMFPECIEINGTNIVKPITLPIYTCNSFCKEALVTCSVPNTIASCDGGTNLPIQLPYTPIEWVKYNLTIYGGVDDYRVNCTDPTLISDSGSSSEIEVGCVEPLIKRPTNDTKGDLEKGYFYVNSQCVINCPVTGMHPKSVWNQIFKINDVLSSISLACTLILLFTFGILNPKLNRFDKKNLFFIAGVFGMSVSGVLIAANGSEKTVCPTPERYAVNTDRVCVASGFLVHFSALFAILWWTIGLADVYYGIKFVGKKIKIKVRYYLLATLTISLAFTLVPLGTGQYQAGLSNVMCFLKDEIYQSMTFFVPLGICLTMGTILMILVMREIYVIVKSNSTSSSFSSSSSKSKSKSKSSDSISYLKLQVKPMLNIILFYFTFLYLFLFVRVINSRYQEYEDSAIPYMLCLAKGGGDSCRLKGPSAGSLGYFAYCLRIYGIYLFIISFLSSRTIKIWKESIILNNAFVTPIIKFIDSSFSNRFSSSKNTSTTQNSTLNNTESDTSKRGNSSAVSINLESRNYNTDDDDL</sequence>
<comment type="subcellular location">
    <subcellularLocation>
        <location evidence="5">Membrane</location>
        <topology evidence="5">Multi-pass membrane protein</topology>
    </subcellularLocation>
</comment>
<comment type="induction">
    <text evidence="4">Up-regulated by P.aeruginosa, PAO1 strain and down-regulated by P.aeruginosa, PA14 strain infection.</text>
</comment>
<comment type="similarity">
    <text evidence="5">Belongs to the G-protein coupled receptor Fz/Smo family.</text>
</comment>
<protein>
    <recommendedName>
        <fullName>Frizzled and smoothened-like protein H</fullName>
    </recommendedName>
</protein>
<feature type="signal peptide" evidence="2">
    <location>
        <begin position="1"/>
        <end position="21"/>
    </location>
</feature>
<feature type="chain" id="PRO_0000371370" description="Frizzled and smoothened-like protein H">
    <location>
        <begin position="22"/>
        <end position="621"/>
    </location>
</feature>
<feature type="topological domain" description="Extracellular" evidence="2">
    <location>
        <begin position="22"/>
        <end position="246"/>
    </location>
</feature>
<feature type="transmembrane region" description="Helical; Name=1" evidence="2">
    <location>
        <begin position="247"/>
        <end position="267"/>
    </location>
</feature>
<feature type="topological domain" description="Cytoplasmic" evidence="2">
    <location>
        <begin position="268"/>
        <end position="277"/>
    </location>
</feature>
<feature type="transmembrane region" description="Helical; Name=2" evidence="2">
    <location>
        <begin position="278"/>
        <end position="298"/>
    </location>
</feature>
<feature type="topological domain" description="Extracellular" evidence="2">
    <location>
        <begin position="299"/>
        <end position="318"/>
    </location>
</feature>
<feature type="transmembrane region" description="Helical; Name=3" evidence="2">
    <location>
        <begin position="319"/>
        <end position="339"/>
    </location>
</feature>
<feature type="topological domain" description="Cytoplasmic" evidence="2">
    <location>
        <begin position="340"/>
        <end position="359"/>
    </location>
</feature>
<feature type="transmembrane region" description="Helical; Name=4" evidence="2">
    <location>
        <begin position="360"/>
        <end position="380"/>
    </location>
</feature>
<feature type="topological domain" description="Extracellular" evidence="2">
    <location>
        <begin position="381"/>
        <end position="400"/>
    </location>
</feature>
<feature type="transmembrane region" description="Helical; Name=5" evidence="2">
    <location>
        <begin position="401"/>
        <end position="421"/>
    </location>
</feature>
<feature type="topological domain" description="Cytoplasmic" evidence="2">
    <location>
        <begin position="422"/>
        <end position="464"/>
    </location>
</feature>
<feature type="transmembrane region" description="Helical; Name=6" evidence="2">
    <location>
        <begin position="465"/>
        <end position="485"/>
    </location>
</feature>
<feature type="topological domain" description="Extracellular" evidence="2">
    <location>
        <begin position="486"/>
        <end position="520"/>
    </location>
</feature>
<feature type="transmembrane region" description="Helical; Name=7" evidence="2">
    <location>
        <begin position="521"/>
        <end position="541"/>
    </location>
</feature>
<feature type="topological domain" description="Cytoplasmic" evidence="2">
    <location>
        <begin position="542"/>
        <end position="621"/>
    </location>
</feature>
<feature type="domain" description="FZ">
    <location>
        <begin position="27"/>
        <end position="166"/>
    </location>
</feature>
<feature type="region of interest" description="Disordered" evidence="3">
    <location>
        <begin position="575"/>
        <end position="603"/>
    </location>
</feature>
<feature type="compositionally biased region" description="Low complexity" evidence="3">
    <location>
        <begin position="575"/>
        <end position="594"/>
    </location>
</feature>
<feature type="glycosylation site" description="N-linked (GlcNAc...) asparagine" evidence="2">
    <location>
        <position position="60"/>
    </location>
</feature>
<feature type="glycosylation site" description="N-linked (GlcNAc...) asparagine" evidence="2">
    <location>
        <position position="107"/>
    </location>
</feature>
<feature type="glycosylation site" description="N-linked (GlcNAc...) asparagine" evidence="2">
    <location>
        <position position="163"/>
    </location>
</feature>
<feature type="glycosylation site" description="N-linked (GlcNAc...) asparagine" evidence="2">
    <location>
        <position position="176"/>
    </location>
</feature>
<feature type="glycosylation site" description="N-linked (GlcNAc...) asparagine" evidence="2">
    <location>
        <position position="206"/>
    </location>
</feature>
<feature type="disulfide bond" evidence="1">
    <location>
        <begin position="32"/>
        <end position="103"/>
    </location>
</feature>
<feature type="disulfide bond" evidence="1">
    <location>
        <begin position="46"/>
        <end position="96"/>
    </location>
</feature>
<name>FSLH_DICDI</name>